<organism>
    <name type="scientific">Leptothrix cholodnii (strain ATCC 51168 / LMG 8142 / SP-6)</name>
    <name type="common">Leptothrix discophora (strain SP-6)</name>
    <dbReference type="NCBI Taxonomy" id="395495"/>
    <lineage>
        <taxon>Bacteria</taxon>
        <taxon>Pseudomonadati</taxon>
        <taxon>Pseudomonadota</taxon>
        <taxon>Betaproteobacteria</taxon>
        <taxon>Burkholderiales</taxon>
        <taxon>Sphaerotilaceae</taxon>
        <taxon>Leptothrix</taxon>
    </lineage>
</organism>
<name>SMG_LEPCP</name>
<gene>
    <name evidence="1" type="primary">smg</name>
    <name type="ordered locus">Lcho_0347</name>
</gene>
<feature type="chain" id="PRO_1000129895" description="Protein Smg homolog">
    <location>
        <begin position="1"/>
        <end position="150"/>
    </location>
</feature>
<sequence>MFDVLVYLYENYWRPDACPDHDQLSKKLSAVGFESEEIADALTWLDGLAGAAESHIGTQSELSLRVYSPSEQDHLGLASIAFISFLESAGVLPPAMREIAVDRAMALGGGPVALEDLKIIVLMVFWSLGEEPDALILDELFVDAEDRLIH</sequence>
<proteinExistence type="inferred from homology"/>
<evidence type="ECO:0000255" key="1">
    <source>
        <dbReference type="HAMAP-Rule" id="MF_00598"/>
    </source>
</evidence>
<accession>B1XW95</accession>
<comment type="similarity">
    <text evidence="1">Belongs to the Smg family.</text>
</comment>
<dbReference type="EMBL" id="CP001013">
    <property type="protein sequence ID" value="ACB32622.1"/>
    <property type="molecule type" value="Genomic_DNA"/>
</dbReference>
<dbReference type="RefSeq" id="WP_012345384.1">
    <property type="nucleotide sequence ID" value="NC_010524.1"/>
</dbReference>
<dbReference type="SMR" id="B1XW95"/>
<dbReference type="STRING" id="395495.Lcho_0347"/>
<dbReference type="KEGG" id="lch:Lcho_0347"/>
<dbReference type="eggNOG" id="COG2922">
    <property type="taxonomic scope" value="Bacteria"/>
</dbReference>
<dbReference type="HOGENOM" id="CLU_133242_0_0_4"/>
<dbReference type="OrthoDB" id="5297467at2"/>
<dbReference type="Proteomes" id="UP000001693">
    <property type="component" value="Chromosome"/>
</dbReference>
<dbReference type="HAMAP" id="MF_00598">
    <property type="entry name" value="Smg"/>
    <property type="match status" value="1"/>
</dbReference>
<dbReference type="InterPro" id="IPR007456">
    <property type="entry name" value="Smg"/>
</dbReference>
<dbReference type="PANTHER" id="PTHR38692">
    <property type="entry name" value="PROTEIN SMG"/>
    <property type="match status" value="1"/>
</dbReference>
<dbReference type="PANTHER" id="PTHR38692:SF1">
    <property type="entry name" value="PROTEIN SMG"/>
    <property type="match status" value="1"/>
</dbReference>
<dbReference type="Pfam" id="PF04361">
    <property type="entry name" value="DUF494"/>
    <property type="match status" value="1"/>
</dbReference>
<protein>
    <recommendedName>
        <fullName evidence="1">Protein Smg homolog</fullName>
    </recommendedName>
</protein>
<reference key="1">
    <citation type="submission" date="2008-03" db="EMBL/GenBank/DDBJ databases">
        <title>Complete sequence of Leptothrix cholodnii SP-6.</title>
        <authorList>
            <consortium name="US DOE Joint Genome Institute"/>
            <person name="Copeland A."/>
            <person name="Lucas S."/>
            <person name="Lapidus A."/>
            <person name="Glavina del Rio T."/>
            <person name="Dalin E."/>
            <person name="Tice H."/>
            <person name="Bruce D."/>
            <person name="Goodwin L."/>
            <person name="Pitluck S."/>
            <person name="Chertkov O."/>
            <person name="Brettin T."/>
            <person name="Detter J.C."/>
            <person name="Han C."/>
            <person name="Kuske C.R."/>
            <person name="Schmutz J."/>
            <person name="Larimer F."/>
            <person name="Land M."/>
            <person name="Hauser L."/>
            <person name="Kyrpides N."/>
            <person name="Lykidis A."/>
            <person name="Emerson D."/>
            <person name="Richardson P."/>
        </authorList>
    </citation>
    <scope>NUCLEOTIDE SEQUENCE [LARGE SCALE GENOMIC DNA]</scope>
    <source>
        <strain>ATCC 51168 / LMG 8142 / SP-6</strain>
    </source>
</reference>
<keyword id="KW-1185">Reference proteome</keyword>